<evidence type="ECO:0000250" key="1"/>
<evidence type="ECO:0000305" key="2"/>
<proteinExistence type="evidence at transcript level"/>
<comment type="function">
    <text evidence="1">CNTF is a survival factor for various neuronal cell types. Seems to prevent the degeneration of motor axons after axotomy (By similarity).</text>
</comment>
<comment type="subcellular location">
    <subcellularLocation>
        <location>Cytoplasm</location>
    </subcellularLocation>
</comment>
<comment type="tissue specificity">
    <text>Nervous system.</text>
</comment>
<comment type="similarity">
    <text evidence="2">Belongs to the CNTF family.</text>
</comment>
<reference key="1">
    <citation type="journal article" date="1997" name="Anim. Genet.">
        <title>Isolation, characterization and chromosomal localization of the porcine ciliary neurotrophic factor (CNTF) gene.</title>
        <authorList>
            <person name="Weaks R.L."/>
            <person name="Ramsoondar J.J."/>
            <person name="Gallagher D.S. Jr."/>
            <person name="Nogues C."/>
            <person name="Piedrahita J.A."/>
        </authorList>
    </citation>
    <scope>NUCLEOTIDE SEQUENCE [GENOMIC DNA]</scope>
</reference>
<feature type="chain" id="PRO_0000149521" description="Ciliary neurotrophic factor">
    <location>
        <begin position="1"/>
        <end position="200"/>
    </location>
</feature>
<organism>
    <name type="scientific">Sus scrofa</name>
    <name type="common">Pig</name>
    <dbReference type="NCBI Taxonomy" id="9823"/>
    <lineage>
        <taxon>Eukaryota</taxon>
        <taxon>Metazoa</taxon>
        <taxon>Chordata</taxon>
        <taxon>Craniata</taxon>
        <taxon>Vertebrata</taxon>
        <taxon>Euteleostomi</taxon>
        <taxon>Mammalia</taxon>
        <taxon>Eutheria</taxon>
        <taxon>Laurasiatheria</taxon>
        <taxon>Artiodactyla</taxon>
        <taxon>Suina</taxon>
        <taxon>Suidae</taxon>
        <taxon>Sus</taxon>
    </lineage>
</organism>
<gene>
    <name type="primary">CNTF</name>
</gene>
<sequence>MAFAEHSPLTPHRRDLCSRSIWLARKIRSDLTALMEAYVKHQGLNENINLDSVDGVPMASTDRWSELTEAERLQENLRAYRTFHVMLARLLEDQREHFTPAEDDFHQAIHTIVLQVAAFAYQLEELMVLLEHKVPPSEADGTPLSVGGGGLFEKKLWGLKVLQELSQWTVRSIRDLRVISSHQAGVPAHGSHHVAKDKKM</sequence>
<name>CNTF_PIG</name>
<keyword id="KW-0963">Cytoplasm</keyword>
<keyword id="KW-0217">Developmental protein</keyword>
<keyword id="KW-0221">Differentiation</keyword>
<keyword id="KW-0339">Growth factor</keyword>
<keyword id="KW-0524">Neurogenesis</keyword>
<keyword id="KW-1185">Reference proteome</keyword>
<accession>O02732</accession>
<dbReference type="EMBL" id="U57644">
    <property type="protein sequence ID" value="AAC27342.1"/>
    <property type="molecule type" value="Genomic_DNA"/>
</dbReference>
<dbReference type="SMR" id="O02732"/>
<dbReference type="FunCoup" id="O02732">
    <property type="interactions" value="197"/>
</dbReference>
<dbReference type="STRING" id="9823.ENSSSCP00000069014"/>
<dbReference type="PaxDb" id="9823-ENSSSCP00000021143"/>
<dbReference type="Ensembl" id="ENSSSCT00015012115.1">
    <property type="protein sequence ID" value="ENSSSCP00015004765.1"/>
    <property type="gene ID" value="ENSSSCG00015009195.1"/>
</dbReference>
<dbReference type="Ensembl" id="ENSSSCT00025038433.1">
    <property type="protein sequence ID" value="ENSSSCP00025016226.1"/>
    <property type="gene ID" value="ENSSSCG00025028324.1"/>
</dbReference>
<dbReference type="Ensembl" id="ENSSSCT00030038384.1">
    <property type="protein sequence ID" value="ENSSSCP00030017640.1"/>
    <property type="gene ID" value="ENSSSCG00030027394.1"/>
</dbReference>
<dbReference type="Ensembl" id="ENSSSCT00035042389.1">
    <property type="protein sequence ID" value="ENSSSCP00035016940.1"/>
    <property type="gene ID" value="ENSSSCG00035031991.1"/>
</dbReference>
<dbReference type="Ensembl" id="ENSSSCT00040004135.1">
    <property type="protein sequence ID" value="ENSSSCP00040001294.1"/>
    <property type="gene ID" value="ENSSSCG00040003304.1"/>
</dbReference>
<dbReference type="Ensembl" id="ENSSSCT00050038513.1">
    <property type="protein sequence ID" value="ENSSSCP00050015952.1"/>
    <property type="gene ID" value="ENSSSCG00050028640.1"/>
</dbReference>
<dbReference type="Ensembl" id="ENSSSCT00060068667.1">
    <property type="protein sequence ID" value="ENSSSCP00060029509.1"/>
    <property type="gene ID" value="ENSSSCG00060050507.1"/>
</dbReference>
<dbReference type="eggNOG" id="ENOG502S4XX">
    <property type="taxonomic scope" value="Eukaryota"/>
</dbReference>
<dbReference type="InParanoid" id="O02732"/>
<dbReference type="Reactome" id="R-SSC-6788467">
    <property type="pathway name" value="IL-6-type cytokine receptor ligand interactions"/>
</dbReference>
<dbReference type="Proteomes" id="UP000008227">
    <property type="component" value="Unplaced"/>
</dbReference>
<dbReference type="Proteomes" id="UP000314985">
    <property type="component" value="Unplaced"/>
</dbReference>
<dbReference type="Proteomes" id="UP000694570">
    <property type="component" value="Unplaced"/>
</dbReference>
<dbReference type="Proteomes" id="UP000694571">
    <property type="component" value="Unplaced"/>
</dbReference>
<dbReference type="Proteomes" id="UP000694720">
    <property type="component" value="Unplaced"/>
</dbReference>
<dbReference type="Proteomes" id="UP000694722">
    <property type="component" value="Unplaced"/>
</dbReference>
<dbReference type="Proteomes" id="UP000694723">
    <property type="component" value="Unplaced"/>
</dbReference>
<dbReference type="Proteomes" id="UP000694724">
    <property type="component" value="Unplaced"/>
</dbReference>
<dbReference type="Proteomes" id="UP000694725">
    <property type="component" value="Unplaced"/>
</dbReference>
<dbReference type="Proteomes" id="UP000694726">
    <property type="component" value="Unplaced"/>
</dbReference>
<dbReference type="Proteomes" id="UP000694727">
    <property type="component" value="Unplaced"/>
</dbReference>
<dbReference type="Proteomes" id="UP000694728">
    <property type="component" value="Unplaced"/>
</dbReference>
<dbReference type="GO" id="GO:0030424">
    <property type="term" value="C:axon"/>
    <property type="evidence" value="ECO:0000318"/>
    <property type="project" value="GO_Central"/>
</dbReference>
<dbReference type="GO" id="GO:0005737">
    <property type="term" value="C:cytoplasm"/>
    <property type="evidence" value="ECO:0007669"/>
    <property type="project" value="UniProtKB-SubCell"/>
</dbReference>
<dbReference type="GO" id="GO:0097386">
    <property type="term" value="C:glial cell projection"/>
    <property type="evidence" value="ECO:0000318"/>
    <property type="project" value="GO_Central"/>
</dbReference>
<dbReference type="GO" id="GO:0043025">
    <property type="term" value="C:neuronal cell body"/>
    <property type="evidence" value="ECO:0000318"/>
    <property type="project" value="GO_Central"/>
</dbReference>
<dbReference type="GO" id="GO:0005127">
    <property type="term" value="F:ciliary neurotrophic factor receptor binding"/>
    <property type="evidence" value="ECO:0000318"/>
    <property type="project" value="GO_Central"/>
</dbReference>
<dbReference type="GO" id="GO:0005125">
    <property type="term" value="F:cytokine activity"/>
    <property type="evidence" value="ECO:0000318"/>
    <property type="project" value="GO_Central"/>
</dbReference>
<dbReference type="GO" id="GO:0008083">
    <property type="term" value="F:growth factor activity"/>
    <property type="evidence" value="ECO:0000318"/>
    <property type="project" value="GO_Central"/>
</dbReference>
<dbReference type="GO" id="GO:0048143">
    <property type="term" value="P:astrocyte activation"/>
    <property type="evidence" value="ECO:0000318"/>
    <property type="project" value="GO_Central"/>
</dbReference>
<dbReference type="GO" id="GO:0007259">
    <property type="term" value="P:cell surface receptor signaling pathway via JAK-STAT"/>
    <property type="evidence" value="ECO:0000318"/>
    <property type="project" value="GO_Central"/>
</dbReference>
<dbReference type="GO" id="GO:0070120">
    <property type="term" value="P:ciliary neurotrophic factor-mediated signaling pathway"/>
    <property type="evidence" value="ECO:0000318"/>
    <property type="project" value="GO_Central"/>
</dbReference>
<dbReference type="GO" id="GO:0043524">
    <property type="term" value="P:negative regulation of neuron apoptotic process"/>
    <property type="evidence" value="ECO:0000318"/>
    <property type="project" value="GO_Central"/>
</dbReference>
<dbReference type="GO" id="GO:0048680">
    <property type="term" value="P:positive regulation of axon regeneration"/>
    <property type="evidence" value="ECO:0000318"/>
    <property type="project" value="GO_Central"/>
</dbReference>
<dbReference type="FunFam" id="1.20.1250.10:FF:000022">
    <property type="entry name" value="ciliary neurotrophic factor"/>
    <property type="match status" value="1"/>
</dbReference>
<dbReference type="Gene3D" id="1.20.1250.10">
    <property type="match status" value="1"/>
</dbReference>
<dbReference type="InterPro" id="IPR009079">
    <property type="entry name" value="4_helix_cytokine-like_core"/>
</dbReference>
<dbReference type="InterPro" id="IPR000151">
    <property type="entry name" value="Ciliary_neurotrophic_fac_CNTF"/>
</dbReference>
<dbReference type="PANTHER" id="PTHR15196">
    <property type="entry name" value="CILIARY NEUROTROPHIC FACTOR"/>
    <property type="match status" value="1"/>
</dbReference>
<dbReference type="PANTHER" id="PTHR15196:SF0">
    <property type="entry name" value="CILIARY NEUROTROPHIC FACTOR"/>
    <property type="match status" value="1"/>
</dbReference>
<dbReference type="Pfam" id="PF01110">
    <property type="entry name" value="CNTF"/>
    <property type="match status" value="1"/>
</dbReference>
<dbReference type="SUPFAM" id="SSF47266">
    <property type="entry name" value="4-helical cytokines"/>
    <property type="match status" value="1"/>
</dbReference>
<protein>
    <recommendedName>
        <fullName>Ciliary neurotrophic factor</fullName>
        <shortName>CNTF</shortName>
    </recommendedName>
</protein>